<reference key="1">
    <citation type="journal article" date="2009" name="PLoS Biol.">
        <title>Lineage-specific biology revealed by a finished genome assembly of the mouse.</title>
        <authorList>
            <person name="Church D.M."/>
            <person name="Goodstadt L."/>
            <person name="Hillier L.W."/>
            <person name="Zody M.C."/>
            <person name="Goldstein S."/>
            <person name="She X."/>
            <person name="Bult C.J."/>
            <person name="Agarwala R."/>
            <person name="Cherry J.L."/>
            <person name="DiCuccio M."/>
            <person name="Hlavina W."/>
            <person name="Kapustin Y."/>
            <person name="Meric P."/>
            <person name="Maglott D."/>
            <person name="Birtle Z."/>
            <person name="Marques A.C."/>
            <person name="Graves T."/>
            <person name="Zhou S."/>
            <person name="Teague B."/>
            <person name="Potamousis K."/>
            <person name="Churas C."/>
            <person name="Place M."/>
            <person name="Herschleb J."/>
            <person name="Runnheim R."/>
            <person name="Forrest D."/>
            <person name="Amos-Landgraf J."/>
            <person name="Schwartz D.C."/>
            <person name="Cheng Z."/>
            <person name="Lindblad-Toh K."/>
            <person name="Eichler E.E."/>
            <person name="Ponting C.P."/>
        </authorList>
    </citation>
    <scope>NUCLEOTIDE SEQUENCE [LARGE SCALE GENOMIC DNA]</scope>
    <source>
        <strain>C57BL/6J</strain>
    </source>
</reference>
<reference key="2">
    <citation type="journal article" date="2004" name="Genome Res.">
        <title>The status, quality, and expansion of the NIH full-length cDNA project: the Mammalian Gene Collection (MGC).</title>
        <authorList>
            <consortium name="The MGC Project Team"/>
        </authorList>
    </citation>
    <scope>NUCLEOTIDE SEQUENCE [LARGE SCALE MRNA]</scope>
    <source>
        <tissue>Brain</tissue>
    </source>
</reference>
<reference evidence="8" key="3">
    <citation type="journal article" date="2023" name="Cell">
        <title>Structures of sperm flagellar doublet microtubules expand the genetic spectrum of male infertility.</title>
        <authorList>
            <person name="Zhou L."/>
            <person name="Liu H."/>
            <person name="Liu S."/>
            <person name="Yang X."/>
            <person name="Dong Y."/>
            <person name="Pan Y."/>
            <person name="Xiao Z."/>
            <person name="Zheng B."/>
            <person name="Sun Y."/>
            <person name="Huang P."/>
            <person name="Zhang X."/>
            <person name="Hu J."/>
            <person name="Sun R."/>
            <person name="Feng S."/>
            <person name="Zhu Y."/>
            <person name="Liu M."/>
            <person name="Gui M."/>
            <person name="Wu J."/>
        </authorList>
    </citation>
    <scope>STRUCTURE BY ELECTRON MICROSCOPY (3.50 ANGSTROMS) OF SPERM FLAGELLAR DOUBLET MICROTUBULES</scope>
    <scope>FUNCTION</scope>
    <scope>SUBCELLULAR LOCATION</scope>
    <scope>SUBUNIT</scope>
</reference>
<reference evidence="9" key="4">
    <citation type="journal article" date="2023" name="Cell">
        <title>De novo protein identification in mammalian sperm using in situ cryoelectron tomography and AlphaFold2 docking.</title>
        <authorList>
            <person name="Chen Z."/>
            <person name="Shiozaki M."/>
            <person name="Haas K.M."/>
            <person name="Skinner W.M."/>
            <person name="Zhao S."/>
            <person name="Guo C."/>
            <person name="Polacco B.J."/>
            <person name="Yu Z."/>
            <person name="Krogan N.J."/>
            <person name="Lishko P.V."/>
            <person name="Kaake R.M."/>
            <person name="Vale R.D."/>
            <person name="Agard D.A."/>
        </authorList>
    </citation>
    <scope>STRUCTURE BY ELECTRON MICROSCOPY (7.70 ANGSTROMS) OF SPERM FLAGELLAR DOUBLET MICROTUBULES</scope>
    <scope>FUNCTION</scope>
    <scope>SUBCELLULAR LOCATION</scope>
    <scope>SUBUNIT</scope>
</reference>
<reference evidence="7" key="5">
    <citation type="journal article" date="2023" name="Cell Discov.">
        <title>In-cell structural insight into the stability of sperm microtubule doublet.</title>
        <authorList>
            <person name="Tai L."/>
            <person name="Yin G."/>
            <person name="Huang X."/>
            <person name="Sun F."/>
            <person name="Zhu Y."/>
        </authorList>
    </citation>
    <scope>STRUCTURE BY ELECTRON MICROSCOPY (4.50 ANGSTROMS)</scope>
    <scope>FUNCTION</scope>
    <scope>SUBUNIT</scope>
    <scope>SUBCELLULAR LOCATION</scope>
</reference>
<evidence type="ECO:0000250" key="1">
    <source>
        <dbReference type="UniProtKB" id="E1BJL9"/>
    </source>
</evidence>
<evidence type="ECO:0000255" key="2"/>
<evidence type="ECO:0000256" key="3">
    <source>
        <dbReference type="SAM" id="MobiDB-lite"/>
    </source>
</evidence>
<evidence type="ECO:0000269" key="4">
    <source>
    </source>
</evidence>
<evidence type="ECO:0000269" key="5">
    <source>
    </source>
</evidence>
<evidence type="ECO:0000269" key="6">
    <source>
    </source>
</evidence>
<evidence type="ECO:0007744" key="7">
    <source>
        <dbReference type="PDB" id="8I7R"/>
    </source>
</evidence>
<evidence type="ECO:0007744" key="8">
    <source>
        <dbReference type="PDB" id="8IYJ"/>
    </source>
</evidence>
<evidence type="ECO:0007744" key="9">
    <source>
        <dbReference type="PDB" id="8TO0"/>
    </source>
</evidence>
<feature type="chain" id="PRO_0000318847" description="Cilia- and flagella- associated protein 210">
    <location>
        <begin position="1"/>
        <end position="547"/>
    </location>
</feature>
<feature type="region of interest" description="Disordered" evidence="3">
    <location>
        <begin position="214"/>
        <end position="237"/>
    </location>
</feature>
<feature type="coiled-coil region" evidence="2">
    <location>
        <begin position="50"/>
        <end position="131"/>
    </location>
</feature>
<feature type="coiled-coil region" evidence="2">
    <location>
        <begin position="183"/>
        <end position="251"/>
    </location>
</feature>
<feature type="coiled-coil region" evidence="2">
    <location>
        <begin position="342"/>
        <end position="405"/>
    </location>
</feature>
<sequence length="547" mass="65132">MQVRFGRRSGQAKESQGMDCFEKEEIPYPPLLPSKVDLQQITIIPHAEWERIRDSLNRLTREAAVLRAERAAKKKMHVKSQELVKHWTNTYAGMKEQKLKAKQKRDEEIEAERKVLDLEEEIYKEGERKKAIESARQCQFHQTERVKRFHSGLLLSRVMKERDVQIQYKKNAVKSDKKWEEQVKLNDEKAFKEDQEKEEKRRRERVALAEDHLKQIEEHKEEEEARKKSEEKDAEEMKRQNLLYEIEMKKNLSKKQEEIDTNRKLLLDNMHNKNIIRAVEQQQQEEEDEKIRKFIKAKKRLIQMRMDKDAETHRLMEERRERINNFLSKLIKEKLDTEDLIIARDISEADAELEKREKEKHEKNQADLKAIAEYRASVMKNKEEEERQRKIEAKEQLQAVLKADKIFQELEKEKSLKVTREKLEIQDAHIQQIAINKYNAKQMKEEELDYWRLTDALTVEKEKEFEKYAREVINFESESTKKYAYPMVKAVQEGVGGGRGPPFVGRGGIRPSYQATDATGVQLPCFKSQGSKYNDFQKSKRRLGFTW</sequence>
<organism>
    <name type="scientific">Mus musculus</name>
    <name type="common">Mouse</name>
    <dbReference type="NCBI Taxonomy" id="10090"/>
    <lineage>
        <taxon>Eukaryota</taxon>
        <taxon>Metazoa</taxon>
        <taxon>Chordata</taxon>
        <taxon>Craniata</taxon>
        <taxon>Vertebrata</taxon>
        <taxon>Euteleostomi</taxon>
        <taxon>Mammalia</taxon>
        <taxon>Eutheria</taxon>
        <taxon>Euarchontoglires</taxon>
        <taxon>Glires</taxon>
        <taxon>Rodentia</taxon>
        <taxon>Myomorpha</taxon>
        <taxon>Muroidea</taxon>
        <taxon>Muridae</taxon>
        <taxon>Murinae</taxon>
        <taxon>Mus</taxon>
        <taxon>Mus</taxon>
    </lineage>
</organism>
<dbReference type="EMBL" id="AL845261">
    <property type="status" value="NOT_ANNOTATED_CDS"/>
    <property type="molecule type" value="Genomic_DNA"/>
</dbReference>
<dbReference type="EMBL" id="BC125570">
    <property type="protein sequence ID" value="AAI25571.1"/>
    <property type="molecule type" value="mRNA"/>
</dbReference>
<dbReference type="EMBL" id="BC132491">
    <property type="protein sequence ID" value="AAI32492.1"/>
    <property type="molecule type" value="mRNA"/>
</dbReference>
<dbReference type="CCDS" id="CCDS38138.1"/>
<dbReference type="RefSeq" id="NP_001071152.1">
    <property type="nucleotide sequence ID" value="NM_001077684.2"/>
</dbReference>
<dbReference type="PDB" id="8I7R">
    <property type="method" value="EM"/>
    <property type="resolution" value="6.50 A"/>
    <property type="chains" value="Y/Z=1-547"/>
</dbReference>
<dbReference type="PDB" id="8IYJ">
    <property type="method" value="EM"/>
    <property type="resolution" value="3.50 A"/>
    <property type="chains" value="o/p=1-547"/>
</dbReference>
<dbReference type="PDB" id="8TO0">
    <property type="method" value="EM"/>
    <property type="resolution" value="7.70 A"/>
    <property type="chains" value="D3/Dn=1-547"/>
</dbReference>
<dbReference type="PDBsum" id="8I7R"/>
<dbReference type="PDBsum" id="8IYJ"/>
<dbReference type="PDBsum" id="8TO0"/>
<dbReference type="EMDB" id="EMD-35230"/>
<dbReference type="EMDB" id="EMD-35823"/>
<dbReference type="EMDB" id="EMD-41431"/>
<dbReference type="SMR" id="A0JLY1"/>
<dbReference type="BioGRID" id="217180">
    <property type="interactions" value="2"/>
</dbReference>
<dbReference type="FunCoup" id="A0JLY1">
    <property type="interactions" value="13"/>
</dbReference>
<dbReference type="STRING" id="10090.ENSMUSP00000092548"/>
<dbReference type="PhosphoSitePlus" id="A0JLY1"/>
<dbReference type="PaxDb" id="10090-ENSMUSP00000092548"/>
<dbReference type="ProteomicsDB" id="265583"/>
<dbReference type="Antibodypedia" id="64630">
    <property type="antibodies" value="43 antibodies from 10 providers"/>
</dbReference>
<dbReference type="Ensembl" id="ENSMUST00000094942.4">
    <property type="protein sequence ID" value="ENSMUSP00000092548.4"/>
    <property type="gene ID" value="ENSMUSG00000070883.4"/>
</dbReference>
<dbReference type="GeneID" id="75051"/>
<dbReference type="KEGG" id="mmu:75051"/>
<dbReference type="UCSC" id="uc008jyo.1">
    <property type="organism name" value="mouse"/>
</dbReference>
<dbReference type="AGR" id="MGI:1923100"/>
<dbReference type="CTD" id="129881"/>
<dbReference type="MGI" id="MGI:1923100">
    <property type="gene designation" value="Cfap210"/>
</dbReference>
<dbReference type="VEuPathDB" id="HostDB:ENSMUSG00000070883"/>
<dbReference type="eggNOG" id="ENOG502QPZ3">
    <property type="taxonomic scope" value="Eukaryota"/>
</dbReference>
<dbReference type="GeneTree" id="ENSGT00730000111149"/>
<dbReference type="HOGENOM" id="CLU_036492_1_0_1"/>
<dbReference type="InParanoid" id="A0JLY1"/>
<dbReference type="OMA" id="EMHFRSQ"/>
<dbReference type="OrthoDB" id="331765at2759"/>
<dbReference type="PhylomeDB" id="A0JLY1"/>
<dbReference type="TreeFam" id="TF328736"/>
<dbReference type="BioGRID-ORCS" id="75051">
    <property type="hits" value="1 hit in 78 CRISPR screens"/>
</dbReference>
<dbReference type="ChiTaRS" id="Ccdc173">
    <property type="organism name" value="mouse"/>
</dbReference>
<dbReference type="PRO" id="PR:A0JLY1"/>
<dbReference type="Proteomes" id="UP000000589">
    <property type="component" value="Chromosome 2"/>
</dbReference>
<dbReference type="RNAct" id="A0JLY1">
    <property type="molecule type" value="protein"/>
</dbReference>
<dbReference type="Bgee" id="ENSMUSG00000070883">
    <property type="expression patterns" value="Expressed in seminiferous tubule of testis and 167 other cell types or tissues"/>
</dbReference>
<dbReference type="GO" id="GO:0160112">
    <property type="term" value="C:axonemal B tubule inner sheath"/>
    <property type="evidence" value="ECO:0000314"/>
    <property type="project" value="UniProtKB"/>
</dbReference>
<dbReference type="GO" id="GO:0005879">
    <property type="term" value="C:axonemal microtubule"/>
    <property type="evidence" value="ECO:0000250"/>
    <property type="project" value="UniProtKB"/>
</dbReference>
<dbReference type="GO" id="GO:0036126">
    <property type="term" value="C:sperm flagellum"/>
    <property type="evidence" value="ECO:0000314"/>
    <property type="project" value="UniProtKB"/>
</dbReference>
<dbReference type="GO" id="GO:0030317">
    <property type="term" value="P:flagellated sperm motility"/>
    <property type="evidence" value="ECO:0000314"/>
    <property type="project" value="UniProtKB"/>
</dbReference>
<dbReference type="InterPro" id="IPR039986">
    <property type="entry name" value="CFAP210"/>
</dbReference>
<dbReference type="InterPro" id="IPR043597">
    <property type="entry name" value="TPH_dom"/>
</dbReference>
<dbReference type="PANTHER" id="PTHR28663:SF1">
    <property type="entry name" value="CILIA- AND FLAGELLA- ASSOCIATED PROTEIN 210"/>
    <property type="match status" value="1"/>
</dbReference>
<dbReference type="PANTHER" id="PTHR28663">
    <property type="entry name" value="COILED-COIL DOMAIN-CONTAINING PROTEIN 173"/>
    <property type="match status" value="1"/>
</dbReference>
<dbReference type="Pfam" id="PF13868">
    <property type="entry name" value="TPH"/>
    <property type="match status" value="1"/>
</dbReference>
<gene>
    <name type="primary">Cfap210</name>
    <name type="synonym">Ccdc173</name>
</gene>
<accession>A0JLY1</accession>
<comment type="function">
    <text evidence="4 5 6">Microtubule inner protein (MIP) part of the dynein-decorated doublet microtubules (DMTs) in cilia axoneme, which is required for motile cilia beating.</text>
</comment>
<comment type="subunit">
    <text evidence="4 5 6">Microtubule inner protein component of sperm flagellar doublet microtubules.</text>
</comment>
<comment type="subcellular location">
    <subcellularLocation>
        <location evidence="1">Cytoplasm</location>
        <location evidence="1">Cytoskeleton</location>
        <location evidence="1">Cilium axoneme</location>
    </subcellularLocation>
    <subcellularLocation>
        <location evidence="4 5 6">Cytoplasm</location>
        <location evidence="4 5 6">Cytoskeleton</location>
        <location evidence="4 5 6">Flagellum axoneme</location>
    </subcellularLocation>
</comment>
<keyword id="KW-0002">3D-structure</keyword>
<keyword id="KW-0966">Cell projection</keyword>
<keyword id="KW-0969">Cilium</keyword>
<keyword id="KW-0175">Coiled coil</keyword>
<keyword id="KW-0963">Cytoplasm</keyword>
<keyword id="KW-0206">Cytoskeleton</keyword>
<keyword id="KW-0282">Flagellum</keyword>
<keyword id="KW-1185">Reference proteome</keyword>
<protein>
    <recommendedName>
        <fullName>Cilia- and flagella- associated protein 210</fullName>
    </recommendedName>
    <alternativeName>
        <fullName>Coiled-coil domain-containing protein 173</fullName>
    </alternativeName>
</protein>
<proteinExistence type="evidence at protein level"/>
<name>CF210_MOUSE</name>